<protein>
    <recommendedName>
        <fullName evidence="1">Methionine aminopeptidase 2-2</fullName>
        <shortName evidence="1">MAP 2-2</shortName>
        <shortName evidence="1">MetAP 2-2</shortName>
        <ecNumber evidence="1">3.4.11.18</ecNumber>
    </recommendedName>
    <alternativeName>
        <fullName evidence="1">Peptidase M</fullName>
    </alternativeName>
</protein>
<keyword id="KW-0031">Aminopeptidase</keyword>
<keyword id="KW-0963">Cytoplasm</keyword>
<keyword id="KW-0378">Hydrolase</keyword>
<keyword id="KW-0479">Metal-binding</keyword>
<keyword id="KW-0645">Protease</keyword>
<keyword id="KW-1185">Reference proteome</keyword>
<sequence length="439" mass="48103">MAAQTTEKLDQLDLNVQAAPTADQVPAEAEEDSDDAQDEGAAEAGAAGAGSTLADKKKKKKKPKKKSKKKGGAKVQSEPPRVPVSNLFPNGQYPEGEIVEYLNDNAYRTTNEEKRYLDRMNNDFLQEYRQGAEVHRQVRQYAQKNIKPGQTLTEIAEGIEDSVRALTGHSGLEEGDNIKGGMGFPCGLSINHCAAHYTPNAGNKMVLNEGDVMKVDFGAHLNGRIVDSAFTMTFDPVYDPLLAAVKDATNTGIREAGIDVRMSDIGAAIQEAMESYEVEINGTMHPVKCIRNLNGHNIDQHVIHGGKSVPIVKSTDQTKMEEGEVFAIETFGSTGKGYVREEMETSHYALAADAPNVPLRLSSAKNLLNLINKNFGTLPFCRRYIDRLGQDKYLLGLNNLVSSGIVQDYPPLCDIKGSYTAQYEHVCFYFGVFSTLIVY</sequence>
<organism>
    <name type="scientific">Penicillium rubens (strain ATCC 28089 / DSM 1075 / NRRL 1951 / Wisconsin 54-1255)</name>
    <name type="common">Penicillium chrysogenum</name>
    <dbReference type="NCBI Taxonomy" id="500485"/>
    <lineage>
        <taxon>Eukaryota</taxon>
        <taxon>Fungi</taxon>
        <taxon>Dikarya</taxon>
        <taxon>Ascomycota</taxon>
        <taxon>Pezizomycotina</taxon>
        <taxon>Eurotiomycetes</taxon>
        <taxon>Eurotiomycetidae</taxon>
        <taxon>Eurotiales</taxon>
        <taxon>Aspergillaceae</taxon>
        <taxon>Penicillium</taxon>
        <taxon>Penicillium chrysogenum species complex</taxon>
    </lineage>
</organism>
<gene>
    <name type="ORF">Pc22g18010</name>
</gene>
<reference key="1">
    <citation type="journal article" date="2008" name="Nat. Biotechnol.">
        <title>Genome sequencing and analysis of the filamentous fungus Penicillium chrysogenum.</title>
        <authorList>
            <person name="van den Berg M.A."/>
            <person name="Albang R."/>
            <person name="Albermann K."/>
            <person name="Badger J.H."/>
            <person name="Daran J.-M."/>
            <person name="Driessen A.J.M."/>
            <person name="Garcia-Estrada C."/>
            <person name="Fedorova N.D."/>
            <person name="Harris D.M."/>
            <person name="Heijne W.H.M."/>
            <person name="Joardar V.S."/>
            <person name="Kiel J.A.K.W."/>
            <person name="Kovalchuk A."/>
            <person name="Martin J.F."/>
            <person name="Nierman W.C."/>
            <person name="Nijland J.G."/>
            <person name="Pronk J.T."/>
            <person name="Roubos J.A."/>
            <person name="van der Klei I.J."/>
            <person name="van Peij N.N.M.E."/>
            <person name="Veenhuis M."/>
            <person name="von Doehren H."/>
            <person name="Wagner C."/>
            <person name="Wortman J.R."/>
            <person name="Bovenberg R.A.L."/>
        </authorList>
    </citation>
    <scope>NUCLEOTIDE SEQUENCE [LARGE SCALE GENOMIC DNA]</scope>
    <source>
        <strain>ATCC 28089 / DSM 1075 / NRRL 1951 / Wisconsin 54-1255</strain>
    </source>
</reference>
<dbReference type="EC" id="3.4.11.18" evidence="1"/>
<dbReference type="EMBL" id="AM920437">
    <property type="protein sequence ID" value="CAP99089.1"/>
    <property type="molecule type" value="Genomic_DNA"/>
</dbReference>
<dbReference type="RefSeq" id="XP_002565710.1">
    <property type="nucleotide sequence ID" value="XM_002565664.1"/>
</dbReference>
<dbReference type="SMR" id="B6HTQ4"/>
<dbReference type="STRING" id="500485.B6HTQ4"/>
<dbReference type="VEuPathDB" id="FungiDB:PCH_Pc22g18010"/>
<dbReference type="eggNOG" id="KOG2775">
    <property type="taxonomic scope" value="Eukaryota"/>
</dbReference>
<dbReference type="HOGENOM" id="CLU_015857_7_1_1"/>
<dbReference type="OMA" id="PFAKRWL"/>
<dbReference type="OrthoDB" id="7848262at2759"/>
<dbReference type="BioCyc" id="PCHR:PC22G18010-MONOMER"/>
<dbReference type="Proteomes" id="UP000000724">
    <property type="component" value="Contig Pc00c22"/>
</dbReference>
<dbReference type="GO" id="GO:0005737">
    <property type="term" value="C:cytoplasm"/>
    <property type="evidence" value="ECO:0007669"/>
    <property type="project" value="UniProtKB-SubCell"/>
</dbReference>
<dbReference type="GO" id="GO:0004239">
    <property type="term" value="F:initiator methionyl aminopeptidase activity"/>
    <property type="evidence" value="ECO:0007669"/>
    <property type="project" value="UniProtKB-UniRule"/>
</dbReference>
<dbReference type="GO" id="GO:0046872">
    <property type="term" value="F:metal ion binding"/>
    <property type="evidence" value="ECO:0007669"/>
    <property type="project" value="UniProtKB-UniRule"/>
</dbReference>
<dbReference type="GO" id="GO:0070006">
    <property type="term" value="F:metalloaminopeptidase activity"/>
    <property type="evidence" value="ECO:0007669"/>
    <property type="project" value="UniProtKB-UniRule"/>
</dbReference>
<dbReference type="GO" id="GO:0006508">
    <property type="term" value="P:proteolysis"/>
    <property type="evidence" value="ECO:0007669"/>
    <property type="project" value="UniProtKB-KW"/>
</dbReference>
<dbReference type="CDD" id="cd01088">
    <property type="entry name" value="MetAP2"/>
    <property type="match status" value="1"/>
</dbReference>
<dbReference type="Gene3D" id="3.90.230.10">
    <property type="entry name" value="Creatinase/methionine aminopeptidase superfamily"/>
    <property type="match status" value="1"/>
</dbReference>
<dbReference type="Gene3D" id="1.10.10.10">
    <property type="entry name" value="Winged helix-like DNA-binding domain superfamily/Winged helix DNA-binding domain"/>
    <property type="match status" value="1"/>
</dbReference>
<dbReference type="HAMAP" id="MF_03175">
    <property type="entry name" value="MetAP_2_euk"/>
    <property type="match status" value="1"/>
</dbReference>
<dbReference type="InterPro" id="IPR036005">
    <property type="entry name" value="Creatinase/aminopeptidase-like"/>
</dbReference>
<dbReference type="InterPro" id="IPR050247">
    <property type="entry name" value="Met_Aminopeptidase_Type2"/>
</dbReference>
<dbReference type="InterPro" id="IPR000994">
    <property type="entry name" value="Pept_M24"/>
</dbReference>
<dbReference type="InterPro" id="IPR001714">
    <property type="entry name" value="Pept_M24_MAP"/>
</dbReference>
<dbReference type="InterPro" id="IPR002468">
    <property type="entry name" value="Pept_M24A_MAP2"/>
</dbReference>
<dbReference type="InterPro" id="IPR018349">
    <property type="entry name" value="Pept_M24A_MAP2_BS"/>
</dbReference>
<dbReference type="InterPro" id="IPR036388">
    <property type="entry name" value="WH-like_DNA-bd_sf"/>
</dbReference>
<dbReference type="InterPro" id="IPR036390">
    <property type="entry name" value="WH_DNA-bd_sf"/>
</dbReference>
<dbReference type="NCBIfam" id="TIGR00501">
    <property type="entry name" value="met_pdase_II"/>
    <property type="match status" value="1"/>
</dbReference>
<dbReference type="PANTHER" id="PTHR45777">
    <property type="entry name" value="METHIONINE AMINOPEPTIDASE 2"/>
    <property type="match status" value="1"/>
</dbReference>
<dbReference type="PANTHER" id="PTHR45777:SF2">
    <property type="entry name" value="METHIONINE AMINOPEPTIDASE 2"/>
    <property type="match status" value="1"/>
</dbReference>
<dbReference type="Pfam" id="PF00557">
    <property type="entry name" value="Peptidase_M24"/>
    <property type="match status" value="1"/>
</dbReference>
<dbReference type="PRINTS" id="PR00599">
    <property type="entry name" value="MAPEPTIDASE"/>
</dbReference>
<dbReference type="SUPFAM" id="SSF55920">
    <property type="entry name" value="Creatinase/aminopeptidase"/>
    <property type="match status" value="1"/>
</dbReference>
<dbReference type="SUPFAM" id="SSF46785">
    <property type="entry name" value="Winged helix' DNA-binding domain"/>
    <property type="match status" value="1"/>
</dbReference>
<dbReference type="PROSITE" id="PS01202">
    <property type="entry name" value="MAP_2"/>
    <property type="match status" value="1"/>
</dbReference>
<evidence type="ECO:0000255" key="1">
    <source>
        <dbReference type="HAMAP-Rule" id="MF_03175"/>
    </source>
</evidence>
<evidence type="ECO:0000256" key="2">
    <source>
        <dbReference type="SAM" id="MobiDB-lite"/>
    </source>
</evidence>
<accession>B6HTQ4</accession>
<comment type="function">
    <text evidence="1">Cotranslationally removes the N-terminal methionine from nascent proteins. The N-terminal methionine is often cleaved when the second residue in the primary sequence is small and uncharged (Met-Ala-, Cys, Gly, Pro, Ser, Thr, or Val).</text>
</comment>
<comment type="catalytic activity">
    <reaction evidence="1">
        <text>Release of N-terminal amino acids, preferentially methionine, from peptides and arylamides.</text>
        <dbReference type="EC" id="3.4.11.18"/>
    </reaction>
</comment>
<comment type="cofactor">
    <cofactor evidence="1">
        <name>Co(2+)</name>
        <dbReference type="ChEBI" id="CHEBI:48828"/>
    </cofactor>
    <cofactor evidence="1">
        <name>Zn(2+)</name>
        <dbReference type="ChEBI" id="CHEBI:29105"/>
    </cofactor>
    <cofactor evidence="1">
        <name>Mn(2+)</name>
        <dbReference type="ChEBI" id="CHEBI:29035"/>
    </cofactor>
    <cofactor evidence="1">
        <name>Fe(2+)</name>
        <dbReference type="ChEBI" id="CHEBI:29033"/>
    </cofactor>
    <text evidence="1">Binds 2 divalent metal cations per subunit. Has a high-affinity and a low affinity metal-binding site. The true nature of the physiological cofactor is under debate. The enzyme is active with cobalt, zinc, manganese or divalent iron ions. Most likely, methionine aminopeptidases function as mononuclear Fe(2+)-metalloproteases under physiological conditions, and the catalytically relevant metal-binding site has been assigned to the histidine-containing high-affinity site.</text>
</comment>
<comment type="subcellular location">
    <subcellularLocation>
        <location evidence="1">Cytoplasm</location>
    </subcellularLocation>
</comment>
<comment type="similarity">
    <text evidence="1">Belongs to the peptidase M24A family. Methionine aminopeptidase eukaryotic type 2 subfamily.</text>
</comment>
<name>MAP22_PENRW</name>
<feature type="chain" id="PRO_0000407610" description="Methionine aminopeptidase 2-2">
    <location>
        <begin position="1"/>
        <end position="439"/>
    </location>
</feature>
<feature type="region of interest" description="Disordered" evidence="2">
    <location>
        <begin position="1"/>
        <end position="90"/>
    </location>
</feature>
<feature type="compositionally biased region" description="Acidic residues" evidence="2">
    <location>
        <begin position="28"/>
        <end position="41"/>
    </location>
</feature>
<feature type="compositionally biased region" description="Basic residues" evidence="2">
    <location>
        <begin position="56"/>
        <end position="72"/>
    </location>
</feature>
<feature type="binding site" evidence="1">
    <location>
        <position position="196"/>
    </location>
    <ligand>
        <name>substrate</name>
    </ligand>
</feature>
<feature type="binding site" evidence="1">
    <location>
        <position position="216"/>
    </location>
    <ligand>
        <name>a divalent metal cation</name>
        <dbReference type="ChEBI" id="CHEBI:60240"/>
        <label>1</label>
    </ligand>
</feature>
<feature type="binding site" evidence="1">
    <location>
        <position position="227"/>
    </location>
    <ligand>
        <name>a divalent metal cation</name>
        <dbReference type="ChEBI" id="CHEBI:60240"/>
        <label>1</label>
    </ligand>
</feature>
<feature type="binding site" evidence="1">
    <location>
        <position position="227"/>
    </location>
    <ligand>
        <name>a divalent metal cation</name>
        <dbReference type="ChEBI" id="CHEBI:60240"/>
        <label>2</label>
        <note>catalytic</note>
    </ligand>
</feature>
<feature type="binding site" evidence="1">
    <location>
        <position position="296"/>
    </location>
    <ligand>
        <name>a divalent metal cation</name>
        <dbReference type="ChEBI" id="CHEBI:60240"/>
        <label>2</label>
        <note>catalytic</note>
    </ligand>
</feature>
<feature type="binding site" evidence="1">
    <location>
        <position position="304"/>
    </location>
    <ligand>
        <name>substrate</name>
    </ligand>
</feature>
<feature type="binding site" evidence="1">
    <location>
        <position position="329"/>
    </location>
    <ligand>
        <name>a divalent metal cation</name>
        <dbReference type="ChEBI" id="CHEBI:60240"/>
        <label>2</label>
        <note>catalytic</note>
    </ligand>
</feature>
<feature type="binding site" evidence="1">
    <location>
        <position position="424"/>
    </location>
    <ligand>
        <name>a divalent metal cation</name>
        <dbReference type="ChEBI" id="CHEBI:60240"/>
        <label>1</label>
    </ligand>
</feature>
<feature type="binding site" evidence="1">
    <location>
        <position position="424"/>
    </location>
    <ligand>
        <name>a divalent metal cation</name>
        <dbReference type="ChEBI" id="CHEBI:60240"/>
        <label>2</label>
        <note>catalytic</note>
    </ligand>
</feature>
<proteinExistence type="inferred from homology"/>